<feature type="chain" id="PRO_0000301726" description="Chromosome segregation in meiosis protein 3">
    <location>
        <begin position="1"/>
        <end position="368"/>
    </location>
</feature>
<feature type="region of interest" description="Disordered" evidence="2">
    <location>
        <begin position="1"/>
        <end position="33"/>
    </location>
</feature>
<feature type="region of interest" description="Disordered" evidence="2">
    <location>
        <begin position="153"/>
        <end position="358"/>
    </location>
</feature>
<feature type="compositionally biased region" description="Polar residues" evidence="2">
    <location>
        <begin position="19"/>
        <end position="28"/>
    </location>
</feature>
<feature type="compositionally biased region" description="Basic and acidic residues" evidence="2">
    <location>
        <begin position="153"/>
        <end position="167"/>
    </location>
</feature>
<feature type="compositionally biased region" description="Acidic residues" evidence="2">
    <location>
        <begin position="213"/>
        <end position="223"/>
    </location>
</feature>
<feature type="compositionally biased region" description="Pro residues" evidence="2">
    <location>
        <begin position="291"/>
        <end position="307"/>
    </location>
</feature>
<feature type="compositionally biased region" description="Acidic residues" evidence="2">
    <location>
        <begin position="326"/>
        <end position="341"/>
    </location>
</feature>
<feature type="compositionally biased region" description="Acidic residues" evidence="2">
    <location>
        <begin position="349"/>
        <end position="358"/>
    </location>
</feature>
<reference key="1">
    <citation type="journal article" date="2004" name="Nature">
        <title>Genome evolution in yeasts.</title>
        <authorList>
            <person name="Dujon B."/>
            <person name="Sherman D."/>
            <person name="Fischer G."/>
            <person name="Durrens P."/>
            <person name="Casaregola S."/>
            <person name="Lafontaine I."/>
            <person name="de Montigny J."/>
            <person name="Marck C."/>
            <person name="Neuveglise C."/>
            <person name="Talla E."/>
            <person name="Goffard N."/>
            <person name="Frangeul L."/>
            <person name="Aigle M."/>
            <person name="Anthouard V."/>
            <person name="Babour A."/>
            <person name="Barbe V."/>
            <person name="Barnay S."/>
            <person name="Blanchin S."/>
            <person name="Beckerich J.-M."/>
            <person name="Beyne E."/>
            <person name="Bleykasten C."/>
            <person name="Boisrame A."/>
            <person name="Boyer J."/>
            <person name="Cattolico L."/>
            <person name="Confanioleri F."/>
            <person name="de Daruvar A."/>
            <person name="Despons L."/>
            <person name="Fabre E."/>
            <person name="Fairhead C."/>
            <person name="Ferry-Dumazet H."/>
            <person name="Groppi A."/>
            <person name="Hantraye F."/>
            <person name="Hennequin C."/>
            <person name="Jauniaux N."/>
            <person name="Joyet P."/>
            <person name="Kachouri R."/>
            <person name="Kerrest A."/>
            <person name="Koszul R."/>
            <person name="Lemaire M."/>
            <person name="Lesur I."/>
            <person name="Ma L."/>
            <person name="Muller H."/>
            <person name="Nicaud J.-M."/>
            <person name="Nikolski M."/>
            <person name="Oztas S."/>
            <person name="Ozier-Kalogeropoulos O."/>
            <person name="Pellenz S."/>
            <person name="Potier S."/>
            <person name="Richard G.-F."/>
            <person name="Straub M.-L."/>
            <person name="Suleau A."/>
            <person name="Swennen D."/>
            <person name="Tekaia F."/>
            <person name="Wesolowski-Louvel M."/>
            <person name="Westhof E."/>
            <person name="Wirth B."/>
            <person name="Zeniou-Meyer M."/>
            <person name="Zivanovic Y."/>
            <person name="Bolotin-Fukuhara M."/>
            <person name="Thierry A."/>
            <person name="Bouchier C."/>
            <person name="Caudron B."/>
            <person name="Scarpelli C."/>
            <person name="Gaillardin C."/>
            <person name="Weissenbach J."/>
            <person name="Wincker P."/>
            <person name="Souciet J.-L."/>
        </authorList>
    </citation>
    <scope>NUCLEOTIDE SEQUENCE [LARGE SCALE GENOMIC DNA]</scope>
    <source>
        <strain>CLIB 122 / E 150</strain>
    </source>
</reference>
<dbReference type="EMBL" id="CR382131">
    <property type="protein sequence ID" value="CAG79449.1"/>
    <property type="molecule type" value="Genomic_DNA"/>
</dbReference>
<dbReference type="RefSeq" id="XP_503856.1">
    <property type="nucleotide sequence ID" value="XM_503856.1"/>
</dbReference>
<dbReference type="SMR" id="Q6C656"/>
<dbReference type="FunCoup" id="Q6C656">
    <property type="interactions" value="240"/>
</dbReference>
<dbReference type="STRING" id="284591.Q6C656"/>
<dbReference type="EnsemblFungi" id="CAG79449">
    <property type="protein sequence ID" value="CAG79449"/>
    <property type="gene ID" value="YALI0_E12287g"/>
</dbReference>
<dbReference type="KEGG" id="yli:2912821"/>
<dbReference type="VEuPathDB" id="FungiDB:YALI0_E12287g"/>
<dbReference type="HOGENOM" id="CLU_752747_0_0_1"/>
<dbReference type="InParanoid" id="Q6C656"/>
<dbReference type="OrthoDB" id="66745at4891"/>
<dbReference type="Proteomes" id="UP000001300">
    <property type="component" value="Chromosome E"/>
</dbReference>
<dbReference type="GO" id="GO:0031298">
    <property type="term" value="C:replication fork protection complex"/>
    <property type="evidence" value="ECO:0000318"/>
    <property type="project" value="GO_Central"/>
</dbReference>
<dbReference type="GO" id="GO:0003677">
    <property type="term" value="F:DNA binding"/>
    <property type="evidence" value="ECO:0000318"/>
    <property type="project" value="GO_Central"/>
</dbReference>
<dbReference type="GO" id="GO:0006281">
    <property type="term" value="P:DNA repair"/>
    <property type="evidence" value="ECO:0007669"/>
    <property type="project" value="UniProtKB-KW"/>
</dbReference>
<dbReference type="GO" id="GO:0000076">
    <property type="term" value="P:DNA replication checkpoint signaling"/>
    <property type="evidence" value="ECO:0000318"/>
    <property type="project" value="GO_Central"/>
</dbReference>
<dbReference type="GO" id="GO:0051321">
    <property type="term" value="P:meiotic cell cycle"/>
    <property type="evidence" value="ECO:0007669"/>
    <property type="project" value="UniProtKB-KW"/>
</dbReference>
<dbReference type="GO" id="GO:0043111">
    <property type="term" value="P:replication fork arrest"/>
    <property type="evidence" value="ECO:0000318"/>
    <property type="project" value="GO_Central"/>
</dbReference>
<dbReference type="GO" id="GO:0031297">
    <property type="term" value="P:replication fork processing"/>
    <property type="evidence" value="ECO:0007669"/>
    <property type="project" value="InterPro"/>
</dbReference>
<dbReference type="InterPro" id="IPR012923">
    <property type="entry name" value="Csm3"/>
</dbReference>
<dbReference type="InterPro" id="IPR040038">
    <property type="entry name" value="TIPIN/Csm3/Swi3"/>
</dbReference>
<dbReference type="PANTHER" id="PTHR13220">
    <property type="entry name" value="TIMELESS INTERACTING-RELATED"/>
    <property type="match status" value="1"/>
</dbReference>
<dbReference type="PANTHER" id="PTHR13220:SF11">
    <property type="entry name" value="TIMELESS-INTERACTING PROTEIN"/>
    <property type="match status" value="1"/>
</dbReference>
<dbReference type="Pfam" id="PF07962">
    <property type="entry name" value="Swi3"/>
    <property type="match status" value="1"/>
</dbReference>
<proteinExistence type="inferred from homology"/>
<evidence type="ECO:0000250" key="1"/>
<evidence type="ECO:0000256" key="2">
    <source>
        <dbReference type="SAM" id="MobiDB-lite"/>
    </source>
</evidence>
<evidence type="ECO:0000305" key="3"/>
<organism>
    <name type="scientific">Yarrowia lipolytica (strain CLIB 122 / E 150)</name>
    <name type="common">Yeast</name>
    <name type="synonym">Candida lipolytica</name>
    <dbReference type="NCBI Taxonomy" id="284591"/>
    <lineage>
        <taxon>Eukaryota</taxon>
        <taxon>Fungi</taxon>
        <taxon>Dikarya</taxon>
        <taxon>Ascomycota</taxon>
        <taxon>Saccharomycotina</taxon>
        <taxon>Dipodascomycetes</taxon>
        <taxon>Dipodascales</taxon>
        <taxon>Dipodascales incertae sedis</taxon>
        <taxon>Yarrowia</taxon>
    </lineage>
</organism>
<gene>
    <name type="primary">CSM3</name>
    <name type="ordered locus">YALI0E12287g</name>
</gene>
<protein>
    <recommendedName>
        <fullName>Chromosome segregation in meiosis protein 3</fullName>
    </recommendedName>
</protein>
<name>CSM3_YARLI</name>
<keyword id="KW-0131">Cell cycle</keyword>
<keyword id="KW-0227">DNA damage</keyword>
<keyword id="KW-0234">DNA repair</keyword>
<keyword id="KW-0236">DNA replication inhibitor</keyword>
<keyword id="KW-0469">Meiosis</keyword>
<keyword id="KW-0539">Nucleus</keyword>
<keyword id="KW-1185">Reference proteome</keyword>
<accession>Q6C656</accession>
<sequence length="368" mass="40939">MDNDYESPWGLSQLEAPADSQNIDSQPLNDDELGINTEVQVKRTRHVAKLDDTRMMDDKGLPALKHLCTKVNLKGNGHEVGDLGRLLDMYQMWSHDLFPKGQFKSLYPLTSKAGRTATVRGLRLAWIDEEQRKKQTADVATAVDELEDITDFRDRGRHFETEPRYSRQSEPPVETSVNVDNPDDLFVGMDSVDHRLVSDEDVDIQAEVSRREDDEDREQDVSELLEGARAQRDKDNSRSSGRLSLFDLGGSGSPSESDRGGSTLEGDIFGTGSLDPTPPPASETSTQAPAAQPPATQPPQAPAPTQPPSNQAPVKAPPQPMRQMDDLELDMLADFEPDFEDQEQHEPEPDPEDYEDDEAMAVMREMGL</sequence>
<comment type="function">
    <text evidence="1">Forms a fork protection complex (FPC) with TOF1 and which is required for chromosome segregation during meiosis and DNA damage repair. FPC coordinates leading and lagging strand synthesis and moves with the replication fork. FPC stabilizes replication forks in a configuration that is recognized by replication checkpoint sensors (By similarity).</text>
</comment>
<comment type="subunit">
    <text evidence="1">Component of the fork protection complex (FPC) consisting of TOF1 and CSM3.</text>
</comment>
<comment type="subcellular location">
    <subcellularLocation>
        <location evidence="1">Nucleus</location>
    </subcellularLocation>
</comment>
<comment type="similarity">
    <text evidence="3">Belongs to the CSM3 family.</text>
</comment>